<sequence>MTPLQQLAATIEARKGADPASSWTAKLLSKGPEKCAEKFGEEAVEAIIEAVKGDRDALTSEAADALYHLLVMCAARDVSLSDIEAELESRHGTSGLTEKANR</sequence>
<protein>
    <recommendedName>
        <fullName evidence="1">Phosphoribosyl-ATP pyrophosphatase</fullName>
        <shortName evidence="1">PRA-PH</shortName>
        <ecNumber evidence="1">3.6.1.31</ecNumber>
    </recommendedName>
</protein>
<gene>
    <name evidence="1" type="primary">hisE</name>
    <name type="ordered locus">Jann_2796</name>
</gene>
<keyword id="KW-0028">Amino-acid biosynthesis</keyword>
<keyword id="KW-0067">ATP-binding</keyword>
<keyword id="KW-0963">Cytoplasm</keyword>
<keyword id="KW-0368">Histidine biosynthesis</keyword>
<keyword id="KW-0378">Hydrolase</keyword>
<keyword id="KW-0547">Nucleotide-binding</keyword>
<keyword id="KW-1185">Reference proteome</keyword>
<accession>Q28NJ9</accession>
<name>HIS2_JANSC</name>
<reference key="1">
    <citation type="submission" date="2006-02" db="EMBL/GenBank/DDBJ databases">
        <title>Complete sequence of chromosome of Jannaschia sp. CCS1.</title>
        <authorList>
            <consortium name="US DOE Joint Genome Institute"/>
            <person name="Copeland A."/>
            <person name="Lucas S."/>
            <person name="Lapidus A."/>
            <person name="Barry K."/>
            <person name="Detter J.C."/>
            <person name="Glavina del Rio T."/>
            <person name="Hammon N."/>
            <person name="Israni S."/>
            <person name="Pitluck S."/>
            <person name="Brettin T."/>
            <person name="Bruce D."/>
            <person name="Han C."/>
            <person name="Tapia R."/>
            <person name="Gilna P."/>
            <person name="Chertkov O."/>
            <person name="Saunders E."/>
            <person name="Schmutz J."/>
            <person name="Larimer F."/>
            <person name="Land M."/>
            <person name="Kyrpides N."/>
            <person name="Lykidis A."/>
            <person name="Moran M.A."/>
            <person name="Belas R."/>
            <person name="Ye W."/>
            <person name="Buchan A."/>
            <person name="Gonzalez J.M."/>
            <person name="Schell M.A."/>
            <person name="Richardson P."/>
        </authorList>
    </citation>
    <scope>NUCLEOTIDE SEQUENCE [LARGE SCALE GENOMIC DNA]</scope>
    <source>
        <strain>CCS1</strain>
    </source>
</reference>
<dbReference type="EC" id="3.6.1.31" evidence="1"/>
<dbReference type="EMBL" id="CP000264">
    <property type="protein sequence ID" value="ABD55713.1"/>
    <property type="molecule type" value="Genomic_DNA"/>
</dbReference>
<dbReference type="RefSeq" id="WP_011455917.1">
    <property type="nucleotide sequence ID" value="NC_007802.1"/>
</dbReference>
<dbReference type="SMR" id="Q28NJ9"/>
<dbReference type="STRING" id="290400.Jann_2796"/>
<dbReference type="KEGG" id="jan:Jann_2796"/>
<dbReference type="eggNOG" id="COG0140">
    <property type="taxonomic scope" value="Bacteria"/>
</dbReference>
<dbReference type="HOGENOM" id="CLU_123337_1_1_5"/>
<dbReference type="OrthoDB" id="9814738at2"/>
<dbReference type="UniPathway" id="UPA00031">
    <property type="reaction ID" value="UER00007"/>
</dbReference>
<dbReference type="Proteomes" id="UP000008326">
    <property type="component" value="Chromosome"/>
</dbReference>
<dbReference type="GO" id="GO:0005737">
    <property type="term" value="C:cytoplasm"/>
    <property type="evidence" value="ECO:0007669"/>
    <property type="project" value="UniProtKB-SubCell"/>
</dbReference>
<dbReference type="GO" id="GO:0005524">
    <property type="term" value="F:ATP binding"/>
    <property type="evidence" value="ECO:0007669"/>
    <property type="project" value="UniProtKB-KW"/>
</dbReference>
<dbReference type="GO" id="GO:0004636">
    <property type="term" value="F:phosphoribosyl-ATP diphosphatase activity"/>
    <property type="evidence" value="ECO:0007669"/>
    <property type="project" value="UniProtKB-UniRule"/>
</dbReference>
<dbReference type="GO" id="GO:0000105">
    <property type="term" value="P:L-histidine biosynthetic process"/>
    <property type="evidence" value="ECO:0007669"/>
    <property type="project" value="UniProtKB-UniRule"/>
</dbReference>
<dbReference type="CDD" id="cd11534">
    <property type="entry name" value="NTP-PPase_HisIE_like"/>
    <property type="match status" value="1"/>
</dbReference>
<dbReference type="FunFam" id="1.10.287.1080:FF:000002">
    <property type="entry name" value="Histidine biosynthesis bifunctional protein HisIE"/>
    <property type="match status" value="1"/>
</dbReference>
<dbReference type="Gene3D" id="1.10.287.1080">
    <property type="entry name" value="MazG-like"/>
    <property type="match status" value="1"/>
</dbReference>
<dbReference type="HAMAP" id="MF_01020">
    <property type="entry name" value="HisE"/>
    <property type="match status" value="1"/>
</dbReference>
<dbReference type="InterPro" id="IPR008179">
    <property type="entry name" value="HisE"/>
</dbReference>
<dbReference type="InterPro" id="IPR021130">
    <property type="entry name" value="PRib-ATP_PPHydrolase-like"/>
</dbReference>
<dbReference type="NCBIfam" id="TIGR03188">
    <property type="entry name" value="histidine_hisI"/>
    <property type="match status" value="1"/>
</dbReference>
<dbReference type="NCBIfam" id="NF001613">
    <property type="entry name" value="PRK00400.1-5"/>
    <property type="match status" value="1"/>
</dbReference>
<dbReference type="PANTHER" id="PTHR42945">
    <property type="entry name" value="HISTIDINE BIOSYNTHESIS BIFUNCTIONAL PROTEIN"/>
    <property type="match status" value="1"/>
</dbReference>
<dbReference type="PANTHER" id="PTHR42945:SF9">
    <property type="entry name" value="HISTIDINE BIOSYNTHESIS BIFUNCTIONAL PROTEIN HISIE"/>
    <property type="match status" value="1"/>
</dbReference>
<dbReference type="Pfam" id="PF01503">
    <property type="entry name" value="PRA-PH"/>
    <property type="match status" value="1"/>
</dbReference>
<dbReference type="SUPFAM" id="SSF101386">
    <property type="entry name" value="all-alpha NTP pyrophosphatases"/>
    <property type="match status" value="1"/>
</dbReference>
<proteinExistence type="inferred from homology"/>
<organism>
    <name type="scientific">Jannaschia sp. (strain CCS1)</name>
    <dbReference type="NCBI Taxonomy" id="290400"/>
    <lineage>
        <taxon>Bacteria</taxon>
        <taxon>Pseudomonadati</taxon>
        <taxon>Pseudomonadota</taxon>
        <taxon>Alphaproteobacteria</taxon>
        <taxon>Rhodobacterales</taxon>
        <taxon>Roseobacteraceae</taxon>
        <taxon>Jannaschia</taxon>
    </lineage>
</organism>
<evidence type="ECO:0000255" key="1">
    <source>
        <dbReference type="HAMAP-Rule" id="MF_01020"/>
    </source>
</evidence>
<comment type="catalytic activity">
    <reaction evidence="1">
        <text>1-(5-phospho-beta-D-ribosyl)-ATP + H2O = 1-(5-phospho-beta-D-ribosyl)-5'-AMP + diphosphate + H(+)</text>
        <dbReference type="Rhea" id="RHEA:22828"/>
        <dbReference type="ChEBI" id="CHEBI:15377"/>
        <dbReference type="ChEBI" id="CHEBI:15378"/>
        <dbReference type="ChEBI" id="CHEBI:33019"/>
        <dbReference type="ChEBI" id="CHEBI:59457"/>
        <dbReference type="ChEBI" id="CHEBI:73183"/>
        <dbReference type="EC" id="3.6.1.31"/>
    </reaction>
</comment>
<comment type="pathway">
    <text evidence="1">Amino-acid biosynthesis; L-histidine biosynthesis; L-histidine from 5-phospho-alpha-D-ribose 1-diphosphate: step 2/9.</text>
</comment>
<comment type="subcellular location">
    <subcellularLocation>
        <location evidence="1">Cytoplasm</location>
    </subcellularLocation>
</comment>
<comment type="similarity">
    <text evidence="1">Belongs to the PRA-PH family.</text>
</comment>
<feature type="chain" id="PRO_1000063341" description="Phosphoribosyl-ATP pyrophosphatase">
    <location>
        <begin position="1"/>
        <end position="102"/>
    </location>
</feature>